<proteinExistence type="inferred from homology"/>
<accession>A1AGF9</accession>
<protein>
    <recommendedName>
        <fullName evidence="1">Ribosomal protein L11 methyltransferase</fullName>
        <shortName evidence="1">L11 Mtase</shortName>
        <ecNumber evidence="1">2.1.1.-</ecNumber>
    </recommendedName>
</protein>
<dbReference type="EC" id="2.1.1.-" evidence="1"/>
<dbReference type="EMBL" id="CP000468">
    <property type="protein sequence ID" value="ABJ02749.1"/>
    <property type="molecule type" value="Genomic_DNA"/>
</dbReference>
<dbReference type="RefSeq" id="WP_001145827.1">
    <property type="nucleotide sequence ID" value="NZ_CADILS010000003.1"/>
</dbReference>
<dbReference type="SMR" id="A1AGF9"/>
<dbReference type="GeneID" id="75206107"/>
<dbReference type="KEGG" id="ecv:APECO1_3179"/>
<dbReference type="HOGENOM" id="CLU_049382_4_1_6"/>
<dbReference type="Proteomes" id="UP000008216">
    <property type="component" value="Chromosome"/>
</dbReference>
<dbReference type="GO" id="GO:0005829">
    <property type="term" value="C:cytosol"/>
    <property type="evidence" value="ECO:0007669"/>
    <property type="project" value="TreeGrafter"/>
</dbReference>
<dbReference type="GO" id="GO:0016279">
    <property type="term" value="F:protein-lysine N-methyltransferase activity"/>
    <property type="evidence" value="ECO:0007669"/>
    <property type="project" value="TreeGrafter"/>
</dbReference>
<dbReference type="GO" id="GO:0032259">
    <property type="term" value="P:methylation"/>
    <property type="evidence" value="ECO:0007669"/>
    <property type="project" value="UniProtKB-KW"/>
</dbReference>
<dbReference type="CDD" id="cd02440">
    <property type="entry name" value="AdoMet_MTases"/>
    <property type="match status" value="1"/>
</dbReference>
<dbReference type="FunFam" id="3.40.50.150:FF:000021">
    <property type="entry name" value="Ribosomal protein L11 methyltransferase"/>
    <property type="match status" value="1"/>
</dbReference>
<dbReference type="Gene3D" id="3.40.50.150">
    <property type="entry name" value="Vaccinia Virus protein VP39"/>
    <property type="match status" value="1"/>
</dbReference>
<dbReference type="HAMAP" id="MF_00735">
    <property type="entry name" value="Methyltr_PrmA"/>
    <property type="match status" value="1"/>
</dbReference>
<dbReference type="InterPro" id="IPR050078">
    <property type="entry name" value="Ribosomal_L11_MeTrfase_PrmA"/>
</dbReference>
<dbReference type="InterPro" id="IPR004498">
    <property type="entry name" value="Ribosomal_PrmA_MeTrfase"/>
</dbReference>
<dbReference type="InterPro" id="IPR029063">
    <property type="entry name" value="SAM-dependent_MTases_sf"/>
</dbReference>
<dbReference type="NCBIfam" id="TIGR00406">
    <property type="entry name" value="prmA"/>
    <property type="match status" value="1"/>
</dbReference>
<dbReference type="PANTHER" id="PTHR43648">
    <property type="entry name" value="ELECTRON TRANSFER FLAVOPROTEIN BETA SUBUNIT LYSINE METHYLTRANSFERASE"/>
    <property type="match status" value="1"/>
</dbReference>
<dbReference type="PANTHER" id="PTHR43648:SF1">
    <property type="entry name" value="ELECTRON TRANSFER FLAVOPROTEIN BETA SUBUNIT LYSINE METHYLTRANSFERASE"/>
    <property type="match status" value="1"/>
</dbReference>
<dbReference type="Pfam" id="PF06325">
    <property type="entry name" value="PrmA"/>
    <property type="match status" value="1"/>
</dbReference>
<dbReference type="PIRSF" id="PIRSF000401">
    <property type="entry name" value="RPL11_MTase"/>
    <property type="match status" value="1"/>
</dbReference>
<dbReference type="SUPFAM" id="SSF53335">
    <property type="entry name" value="S-adenosyl-L-methionine-dependent methyltransferases"/>
    <property type="match status" value="1"/>
</dbReference>
<comment type="function">
    <text evidence="1">Methylates ribosomal protein L11.</text>
</comment>
<comment type="catalytic activity">
    <reaction evidence="1">
        <text>L-lysyl-[protein] + 3 S-adenosyl-L-methionine = N(6),N(6),N(6)-trimethyl-L-lysyl-[protein] + 3 S-adenosyl-L-homocysteine + 3 H(+)</text>
        <dbReference type="Rhea" id="RHEA:54192"/>
        <dbReference type="Rhea" id="RHEA-COMP:9752"/>
        <dbReference type="Rhea" id="RHEA-COMP:13826"/>
        <dbReference type="ChEBI" id="CHEBI:15378"/>
        <dbReference type="ChEBI" id="CHEBI:29969"/>
        <dbReference type="ChEBI" id="CHEBI:57856"/>
        <dbReference type="ChEBI" id="CHEBI:59789"/>
        <dbReference type="ChEBI" id="CHEBI:61961"/>
    </reaction>
</comment>
<comment type="subcellular location">
    <subcellularLocation>
        <location evidence="1">Cytoplasm</location>
    </subcellularLocation>
</comment>
<comment type="similarity">
    <text evidence="1">Belongs to the methyltransferase superfamily. PrmA family.</text>
</comment>
<sequence length="293" mass="31877">MPWIQLKLNTTGANAEDLSDALMEAGAVSITFQDTHDTPVFEPLPGETRLWGDTDVIGLFDAETDMNDVVAILENHPLLGAGFAHKIEQLEDKDWEREWMDNFHPMRFGERLWICPSWRDVPDENAVNVMLDPGLAFGTGTHPTTSLCLQWLDSLDLTGKTVIDFGCGSGILAIAALKLGAAKAIGIDIDPQAIQASRDNAERNGVSDRLELYLPKDQPEEMKADVVVANILAGPLRELAPLISVLPVSGGLLGLSGILASQAESVCEAYADSFALDPVVEKEEWCRITGRKN</sequence>
<gene>
    <name evidence="1" type="primary">prmA</name>
    <name type="ordered locus">Ecok1_32550</name>
    <name type="ORF">APECO1_3179</name>
</gene>
<feature type="chain" id="PRO_1000046021" description="Ribosomal protein L11 methyltransferase">
    <location>
        <begin position="1"/>
        <end position="293"/>
    </location>
</feature>
<feature type="binding site" evidence="1">
    <location>
        <position position="145"/>
    </location>
    <ligand>
        <name>S-adenosyl-L-methionine</name>
        <dbReference type="ChEBI" id="CHEBI:59789"/>
    </ligand>
</feature>
<feature type="binding site" evidence="1">
    <location>
        <position position="166"/>
    </location>
    <ligand>
        <name>S-adenosyl-L-methionine</name>
        <dbReference type="ChEBI" id="CHEBI:59789"/>
    </ligand>
</feature>
<feature type="binding site" evidence="1">
    <location>
        <position position="188"/>
    </location>
    <ligand>
        <name>S-adenosyl-L-methionine</name>
        <dbReference type="ChEBI" id="CHEBI:59789"/>
    </ligand>
</feature>
<feature type="binding site" evidence="1">
    <location>
        <position position="230"/>
    </location>
    <ligand>
        <name>S-adenosyl-L-methionine</name>
        <dbReference type="ChEBI" id="CHEBI:59789"/>
    </ligand>
</feature>
<name>PRMA_ECOK1</name>
<organism>
    <name type="scientific">Escherichia coli O1:K1 / APEC</name>
    <dbReference type="NCBI Taxonomy" id="405955"/>
    <lineage>
        <taxon>Bacteria</taxon>
        <taxon>Pseudomonadati</taxon>
        <taxon>Pseudomonadota</taxon>
        <taxon>Gammaproteobacteria</taxon>
        <taxon>Enterobacterales</taxon>
        <taxon>Enterobacteriaceae</taxon>
        <taxon>Escherichia</taxon>
    </lineage>
</organism>
<reference key="1">
    <citation type="journal article" date="2007" name="J. Bacteriol.">
        <title>The genome sequence of avian pathogenic Escherichia coli strain O1:K1:H7 shares strong similarities with human extraintestinal pathogenic E. coli genomes.</title>
        <authorList>
            <person name="Johnson T.J."/>
            <person name="Kariyawasam S."/>
            <person name="Wannemuehler Y."/>
            <person name="Mangiamele P."/>
            <person name="Johnson S.J."/>
            <person name="Doetkott C."/>
            <person name="Skyberg J.A."/>
            <person name="Lynne A.M."/>
            <person name="Johnson J.R."/>
            <person name="Nolan L.K."/>
        </authorList>
    </citation>
    <scope>NUCLEOTIDE SEQUENCE [LARGE SCALE GENOMIC DNA]</scope>
</reference>
<keyword id="KW-0963">Cytoplasm</keyword>
<keyword id="KW-0489">Methyltransferase</keyword>
<keyword id="KW-1185">Reference proteome</keyword>
<keyword id="KW-0949">S-adenosyl-L-methionine</keyword>
<keyword id="KW-0808">Transferase</keyword>
<evidence type="ECO:0000255" key="1">
    <source>
        <dbReference type="HAMAP-Rule" id="MF_00735"/>
    </source>
</evidence>